<feature type="chain" id="PRO_1000079481" description="NAD kinase">
    <location>
        <begin position="1"/>
        <end position="284"/>
    </location>
</feature>
<feature type="active site" description="Proton acceptor" evidence="1">
    <location>
        <position position="60"/>
    </location>
</feature>
<feature type="binding site" evidence="1">
    <location>
        <begin position="60"/>
        <end position="61"/>
    </location>
    <ligand>
        <name>NAD(+)</name>
        <dbReference type="ChEBI" id="CHEBI:57540"/>
    </ligand>
</feature>
<feature type="binding site" evidence="1">
    <location>
        <begin position="134"/>
        <end position="135"/>
    </location>
    <ligand>
        <name>NAD(+)</name>
        <dbReference type="ChEBI" id="CHEBI:57540"/>
    </ligand>
</feature>
<feature type="binding site" evidence="1">
    <location>
        <position position="145"/>
    </location>
    <ligand>
        <name>NAD(+)</name>
        <dbReference type="ChEBI" id="CHEBI:57540"/>
    </ligand>
</feature>
<feature type="binding site" evidence="1">
    <location>
        <position position="162"/>
    </location>
    <ligand>
        <name>NAD(+)</name>
        <dbReference type="ChEBI" id="CHEBI:57540"/>
    </ligand>
</feature>
<feature type="binding site" evidence="1">
    <location>
        <position position="164"/>
    </location>
    <ligand>
        <name>NAD(+)</name>
        <dbReference type="ChEBI" id="CHEBI:57540"/>
    </ligand>
</feature>
<feature type="binding site" evidence="1">
    <location>
        <begin position="175"/>
        <end position="180"/>
    </location>
    <ligand>
        <name>NAD(+)</name>
        <dbReference type="ChEBI" id="CHEBI:57540"/>
    </ligand>
</feature>
<feature type="binding site" evidence="1">
    <location>
        <position position="234"/>
    </location>
    <ligand>
        <name>NAD(+)</name>
        <dbReference type="ChEBI" id="CHEBI:57540"/>
    </ligand>
</feature>
<protein>
    <recommendedName>
        <fullName evidence="1">NAD kinase</fullName>
        <ecNumber evidence="1">2.7.1.23</ecNumber>
    </recommendedName>
    <alternativeName>
        <fullName evidence="1">ATP-dependent NAD kinase</fullName>
    </alternativeName>
</protein>
<proteinExistence type="inferred from homology"/>
<sequence>MNNIGIAINPSKDVDNRILNMVVKKFKEKFNLKNIEVFNSFDIEEQNLADIDLLIVLGGDGTLLGIARSLNDSFNSPILGINIGNLGFLSSVDISDIDIALEKLKDGKYKFVDRMMLNCKVESDENKEELKALNDVVLARGTLSRMVKFTIFVDGKIYSTFKGDGLIIATPTGSTAYSFSAGGPFIYPDLELITITPICPHTKSMQTIVLKGDSVIDIYADHEEEKIYLTVDGQKAIKINHETSVKVSKNKKSVKLLVFDDYDYFKVLRSKILNNSKECDGEKL</sequence>
<evidence type="ECO:0000255" key="1">
    <source>
        <dbReference type="HAMAP-Rule" id="MF_00361"/>
    </source>
</evidence>
<gene>
    <name evidence="1" type="primary">nadK</name>
    <name type="ordered locus">Cbei_1708</name>
</gene>
<dbReference type="EC" id="2.7.1.23" evidence="1"/>
<dbReference type="EMBL" id="CP000721">
    <property type="protein sequence ID" value="ABR33880.1"/>
    <property type="molecule type" value="Genomic_DNA"/>
</dbReference>
<dbReference type="RefSeq" id="WP_011969032.1">
    <property type="nucleotide sequence ID" value="NC_009617.1"/>
</dbReference>
<dbReference type="SMR" id="A6LU50"/>
<dbReference type="KEGG" id="cbe:Cbei_1708"/>
<dbReference type="eggNOG" id="COG0061">
    <property type="taxonomic scope" value="Bacteria"/>
</dbReference>
<dbReference type="HOGENOM" id="CLU_008831_0_1_9"/>
<dbReference type="Proteomes" id="UP000000565">
    <property type="component" value="Chromosome"/>
</dbReference>
<dbReference type="GO" id="GO:0005737">
    <property type="term" value="C:cytoplasm"/>
    <property type="evidence" value="ECO:0007669"/>
    <property type="project" value="UniProtKB-SubCell"/>
</dbReference>
<dbReference type="GO" id="GO:0005524">
    <property type="term" value="F:ATP binding"/>
    <property type="evidence" value="ECO:0007669"/>
    <property type="project" value="UniProtKB-KW"/>
</dbReference>
<dbReference type="GO" id="GO:0046872">
    <property type="term" value="F:metal ion binding"/>
    <property type="evidence" value="ECO:0007669"/>
    <property type="project" value="UniProtKB-UniRule"/>
</dbReference>
<dbReference type="GO" id="GO:0051287">
    <property type="term" value="F:NAD binding"/>
    <property type="evidence" value="ECO:0007669"/>
    <property type="project" value="UniProtKB-ARBA"/>
</dbReference>
<dbReference type="GO" id="GO:0003951">
    <property type="term" value="F:NAD+ kinase activity"/>
    <property type="evidence" value="ECO:0007669"/>
    <property type="project" value="UniProtKB-UniRule"/>
</dbReference>
<dbReference type="GO" id="GO:0019674">
    <property type="term" value="P:NAD metabolic process"/>
    <property type="evidence" value="ECO:0007669"/>
    <property type="project" value="InterPro"/>
</dbReference>
<dbReference type="GO" id="GO:0006741">
    <property type="term" value="P:NADP biosynthetic process"/>
    <property type="evidence" value="ECO:0007669"/>
    <property type="project" value="UniProtKB-UniRule"/>
</dbReference>
<dbReference type="Gene3D" id="3.40.50.10330">
    <property type="entry name" value="Probable inorganic polyphosphate/atp-NAD kinase, domain 1"/>
    <property type="match status" value="1"/>
</dbReference>
<dbReference type="Gene3D" id="2.60.200.30">
    <property type="entry name" value="Probable inorganic polyphosphate/atp-NAD kinase, domain 2"/>
    <property type="match status" value="1"/>
</dbReference>
<dbReference type="HAMAP" id="MF_00361">
    <property type="entry name" value="NAD_kinase"/>
    <property type="match status" value="1"/>
</dbReference>
<dbReference type="InterPro" id="IPR017438">
    <property type="entry name" value="ATP-NAD_kinase_N"/>
</dbReference>
<dbReference type="InterPro" id="IPR017437">
    <property type="entry name" value="ATP-NAD_kinase_PpnK-typ_C"/>
</dbReference>
<dbReference type="InterPro" id="IPR016064">
    <property type="entry name" value="NAD/diacylglycerol_kinase_sf"/>
</dbReference>
<dbReference type="InterPro" id="IPR002504">
    <property type="entry name" value="NADK"/>
</dbReference>
<dbReference type="PANTHER" id="PTHR20275">
    <property type="entry name" value="NAD KINASE"/>
    <property type="match status" value="1"/>
</dbReference>
<dbReference type="PANTHER" id="PTHR20275:SF0">
    <property type="entry name" value="NAD KINASE"/>
    <property type="match status" value="1"/>
</dbReference>
<dbReference type="Pfam" id="PF01513">
    <property type="entry name" value="NAD_kinase"/>
    <property type="match status" value="1"/>
</dbReference>
<dbReference type="Pfam" id="PF20143">
    <property type="entry name" value="NAD_kinase_C"/>
    <property type="match status" value="1"/>
</dbReference>
<dbReference type="SUPFAM" id="SSF111331">
    <property type="entry name" value="NAD kinase/diacylglycerol kinase-like"/>
    <property type="match status" value="1"/>
</dbReference>
<comment type="function">
    <text evidence="1">Involved in the regulation of the intracellular balance of NAD and NADP, and is a key enzyme in the biosynthesis of NADP. Catalyzes specifically the phosphorylation on 2'-hydroxyl of the adenosine moiety of NAD to yield NADP.</text>
</comment>
<comment type="catalytic activity">
    <reaction evidence="1">
        <text>NAD(+) + ATP = ADP + NADP(+) + H(+)</text>
        <dbReference type="Rhea" id="RHEA:18629"/>
        <dbReference type="ChEBI" id="CHEBI:15378"/>
        <dbReference type="ChEBI" id="CHEBI:30616"/>
        <dbReference type="ChEBI" id="CHEBI:57540"/>
        <dbReference type="ChEBI" id="CHEBI:58349"/>
        <dbReference type="ChEBI" id="CHEBI:456216"/>
        <dbReference type="EC" id="2.7.1.23"/>
    </reaction>
</comment>
<comment type="cofactor">
    <cofactor evidence="1">
        <name>a divalent metal cation</name>
        <dbReference type="ChEBI" id="CHEBI:60240"/>
    </cofactor>
</comment>
<comment type="subcellular location">
    <subcellularLocation>
        <location evidence="1">Cytoplasm</location>
    </subcellularLocation>
</comment>
<comment type="similarity">
    <text evidence="1">Belongs to the NAD kinase family.</text>
</comment>
<reference key="1">
    <citation type="submission" date="2007-06" db="EMBL/GenBank/DDBJ databases">
        <title>Complete sequence of Clostridium beijerinckii NCIMB 8052.</title>
        <authorList>
            <consortium name="US DOE Joint Genome Institute"/>
            <person name="Copeland A."/>
            <person name="Lucas S."/>
            <person name="Lapidus A."/>
            <person name="Barry K."/>
            <person name="Detter J.C."/>
            <person name="Glavina del Rio T."/>
            <person name="Hammon N."/>
            <person name="Israni S."/>
            <person name="Dalin E."/>
            <person name="Tice H."/>
            <person name="Pitluck S."/>
            <person name="Sims D."/>
            <person name="Brettin T."/>
            <person name="Bruce D."/>
            <person name="Tapia R."/>
            <person name="Brainard J."/>
            <person name="Schmutz J."/>
            <person name="Larimer F."/>
            <person name="Land M."/>
            <person name="Hauser L."/>
            <person name="Kyrpides N."/>
            <person name="Mikhailova N."/>
            <person name="Bennet G."/>
            <person name="Cann I."/>
            <person name="Chen J.-S."/>
            <person name="Contreras A.L."/>
            <person name="Jones D."/>
            <person name="Kashket E."/>
            <person name="Mitchell W."/>
            <person name="Stoddard S."/>
            <person name="Schwarz W."/>
            <person name="Qureshi N."/>
            <person name="Young M."/>
            <person name="Shi Z."/>
            <person name="Ezeji T."/>
            <person name="White B."/>
            <person name="Blaschek H."/>
            <person name="Richardson P."/>
        </authorList>
    </citation>
    <scope>NUCLEOTIDE SEQUENCE [LARGE SCALE GENOMIC DNA]</scope>
    <source>
        <strain>ATCC 51743 / NCIMB 8052</strain>
    </source>
</reference>
<organism>
    <name type="scientific">Clostridium beijerinckii (strain ATCC 51743 / NCIMB 8052)</name>
    <name type="common">Clostridium acetobutylicum</name>
    <dbReference type="NCBI Taxonomy" id="290402"/>
    <lineage>
        <taxon>Bacteria</taxon>
        <taxon>Bacillati</taxon>
        <taxon>Bacillota</taxon>
        <taxon>Clostridia</taxon>
        <taxon>Eubacteriales</taxon>
        <taxon>Clostridiaceae</taxon>
        <taxon>Clostridium</taxon>
    </lineage>
</organism>
<name>NADK_CLOB8</name>
<accession>A6LU50</accession>
<keyword id="KW-0067">ATP-binding</keyword>
<keyword id="KW-0963">Cytoplasm</keyword>
<keyword id="KW-0418">Kinase</keyword>
<keyword id="KW-0520">NAD</keyword>
<keyword id="KW-0521">NADP</keyword>
<keyword id="KW-0547">Nucleotide-binding</keyword>
<keyword id="KW-0808">Transferase</keyword>